<comment type="similarity">
    <text evidence="1">Belongs to the bacterial ribosomal protein bS16 family.</text>
</comment>
<organism>
    <name type="scientific">Symbiobacterium thermophilum (strain DSM 24528 / JCM 14929 / IAM 14863 / T)</name>
    <dbReference type="NCBI Taxonomy" id="292459"/>
    <lineage>
        <taxon>Bacteria</taxon>
        <taxon>Bacillati</taxon>
        <taxon>Bacillota</taxon>
        <taxon>Clostridia</taxon>
        <taxon>Eubacteriales</taxon>
        <taxon>Symbiobacteriaceae</taxon>
        <taxon>Symbiobacterium</taxon>
    </lineage>
</organism>
<protein>
    <recommendedName>
        <fullName evidence="1">Small ribosomal subunit protein bS16</fullName>
    </recommendedName>
    <alternativeName>
        <fullName evidence="2">30S ribosomal protein S16</fullName>
    </alternativeName>
</protein>
<sequence>MALKIRLKRMGMKKTPFYRLVVTEATSPRDGRFVEEIGYYDPTKNPVVLNIDEEKALNWLLKGATPTETTRALLSKAGVLKKFDEARK</sequence>
<dbReference type="EMBL" id="AP006840">
    <property type="protein sequence ID" value="BAD40451.1"/>
    <property type="molecule type" value="Genomic_DNA"/>
</dbReference>
<dbReference type="RefSeq" id="WP_011195596.1">
    <property type="nucleotide sequence ID" value="NC_006177.1"/>
</dbReference>
<dbReference type="SMR" id="Q67PE2"/>
<dbReference type="STRING" id="292459.STH1466"/>
<dbReference type="KEGG" id="sth:STH1466"/>
<dbReference type="eggNOG" id="COG0228">
    <property type="taxonomic scope" value="Bacteria"/>
</dbReference>
<dbReference type="HOGENOM" id="CLU_100590_5_0_9"/>
<dbReference type="OrthoDB" id="9807878at2"/>
<dbReference type="Proteomes" id="UP000000417">
    <property type="component" value="Chromosome"/>
</dbReference>
<dbReference type="GO" id="GO:0005737">
    <property type="term" value="C:cytoplasm"/>
    <property type="evidence" value="ECO:0007669"/>
    <property type="project" value="UniProtKB-ARBA"/>
</dbReference>
<dbReference type="GO" id="GO:0015935">
    <property type="term" value="C:small ribosomal subunit"/>
    <property type="evidence" value="ECO:0007669"/>
    <property type="project" value="TreeGrafter"/>
</dbReference>
<dbReference type="GO" id="GO:0003735">
    <property type="term" value="F:structural constituent of ribosome"/>
    <property type="evidence" value="ECO:0007669"/>
    <property type="project" value="InterPro"/>
</dbReference>
<dbReference type="GO" id="GO:0006412">
    <property type="term" value="P:translation"/>
    <property type="evidence" value="ECO:0007669"/>
    <property type="project" value="UniProtKB-UniRule"/>
</dbReference>
<dbReference type="Gene3D" id="3.30.1320.10">
    <property type="match status" value="1"/>
</dbReference>
<dbReference type="HAMAP" id="MF_00385">
    <property type="entry name" value="Ribosomal_bS16"/>
    <property type="match status" value="1"/>
</dbReference>
<dbReference type="InterPro" id="IPR000307">
    <property type="entry name" value="Ribosomal_bS16"/>
</dbReference>
<dbReference type="InterPro" id="IPR023803">
    <property type="entry name" value="Ribosomal_bS16_dom_sf"/>
</dbReference>
<dbReference type="NCBIfam" id="TIGR00002">
    <property type="entry name" value="S16"/>
    <property type="match status" value="1"/>
</dbReference>
<dbReference type="PANTHER" id="PTHR12919">
    <property type="entry name" value="30S RIBOSOMAL PROTEIN S16"/>
    <property type="match status" value="1"/>
</dbReference>
<dbReference type="PANTHER" id="PTHR12919:SF20">
    <property type="entry name" value="SMALL RIBOSOMAL SUBUNIT PROTEIN BS16M"/>
    <property type="match status" value="1"/>
</dbReference>
<dbReference type="Pfam" id="PF00886">
    <property type="entry name" value="Ribosomal_S16"/>
    <property type="match status" value="1"/>
</dbReference>
<dbReference type="SUPFAM" id="SSF54565">
    <property type="entry name" value="Ribosomal protein S16"/>
    <property type="match status" value="1"/>
</dbReference>
<accession>Q67PE2</accession>
<gene>
    <name evidence="1" type="primary">rpsP</name>
    <name type="ordered locus">STH1466</name>
</gene>
<proteinExistence type="inferred from homology"/>
<evidence type="ECO:0000255" key="1">
    <source>
        <dbReference type="HAMAP-Rule" id="MF_00385"/>
    </source>
</evidence>
<evidence type="ECO:0000305" key="2"/>
<name>RS16_SYMTH</name>
<feature type="chain" id="PRO_0000243880" description="Small ribosomal subunit protein bS16">
    <location>
        <begin position="1"/>
        <end position="88"/>
    </location>
</feature>
<reference key="1">
    <citation type="journal article" date="2004" name="Nucleic Acids Res.">
        <title>Genome sequence of Symbiobacterium thermophilum, an uncultivable bacterium that depends on microbial commensalism.</title>
        <authorList>
            <person name="Ueda K."/>
            <person name="Yamashita A."/>
            <person name="Ishikawa J."/>
            <person name="Shimada M."/>
            <person name="Watsuji T."/>
            <person name="Morimura K."/>
            <person name="Ikeda H."/>
            <person name="Hattori M."/>
            <person name="Beppu T."/>
        </authorList>
    </citation>
    <scope>NUCLEOTIDE SEQUENCE [LARGE SCALE GENOMIC DNA]</scope>
    <source>
        <strain>DSM 24528 / JCM 14929 / IAM 14863 / T</strain>
    </source>
</reference>
<keyword id="KW-1185">Reference proteome</keyword>
<keyword id="KW-0687">Ribonucleoprotein</keyword>
<keyword id="KW-0689">Ribosomal protein</keyword>